<reference key="1">
    <citation type="journal article" date="2006" name="J. Bacteriol.">
        <title>The genome of the obligately intracellular bacterium Ehrlichia canis reveals themes of complex membrane structure and immune evasion strategies.</title>
        <authorList>
            <person name="Mavromatis K."/>
            <person name="Doyle C.K."/>
            <person name="Lykidis A."/>
            <person name="Ivanova N."/>
            <person name="Francino M.P."/>
            <person name="Chain P."/>
            <person name="Shin M."/>
            <person name="Malfatti S."/>
            <person name="Larimer F."/>
            <person name="Copeland A."/>
            <person name="Detter J.C."/>
            <person name="Land M."/>
            <person name="Richardson P.M."/>
            <person name="Yu X.J."/>
            <person name="Walker D.H."/>
            <person name="McBride J.W."/>
            <person name="Kyrpides N.C."/>
        </authorList>
    </citation>
    <scope>NUCLEOTIDE SEQUENCE [LARGE SCALE GENOMIC DNA]</scope>
    <source>
        <strain>Jake</strain>
    </source>
</reference>
<name>PYRF_EHRCJ</name>
<feature type="chain" id="PRO_0000241856" description="Orotidine 5'-phosphate decarboxylase">
    <location>
        <begin position="1"/>
        <end position="228"/>
    </location>
</feature>
<feature type="active site" description="Proton donor" evidence="1">
    <location>
        <position position="62"/>
    </location>
</feature>
<feature type="binding site" evidence="1">
    <location>
        <position position="11"/>
    </location>
    <ligand>
        <name>substrate</name>
    </ligand>
</feature>
<feature type="binding site" evidence="1">
    <location>
        <position position="33"/>
    </location>
    <ligand>
        <name>substrate</name>
    </ligand>
</feature>
<feature type="binding site" evidence="1">
    <location>
        <begin position="60"/>
        <end position="69"/>
    </location>
    <ligand>
        <name>substrate</name>
    </ligand>
</feature>
<feature type="binding site" evidence="1">
    <location>
        <position position="117"/>
    </location>
    <ligand>
        <name>substrate</name>
    </ligand>
</feature>
<feature type="binding site" evidence="1">
    <location>
        <position position="178"/>
    </location>
    <ligand>
        <name>substrate</name>
    </ligand>
</feature>
<feature type="binding site" evidence="1">
    <location>
        <position position="186"/>
    </location>
    <ligand>
        <name>substrate</name>
    </ligand>
</feature>
<feature type="binding site" evidence="1">
    <location>
        <position position="206"/>
    </location>
    <ligand>
        <name>substrate</name>
    </ligand>
</feature>
<feature type="binding site" evidence="1">
    <location>
        <position position="207"/>
    </location>
    <ligand>
        <name>substrate</name>
    </ligand>
</feature>
<protein>
    <recommendedName>
        <fullName evidence="1">Orotidine 5'-phosphate decarboxylase</fullName>
        <ecNumber evidence="1">4.1.1.23</ecNumber>
    </recommendedName>
    <alternativeName>
        <fullName evidence="1">OMP decarboxylase</fullName>
        <shortName evidence="1">OMPDCase</shortName>
        <shortName evidence="1">OMPdecase</shortName>
    </alternativeName>
</protein>
<dbReference type="EC" id="4.1.1.23" evidence="1"/>
<dbReference type="EMBL" id="CP000107">
    <property type="protein sequence ID" value="AAZ68331.1"/>
    <property type="molecule type" value="Genomic_DNA"/>
</dbReference>
<dbReference type="RefSeq" id="WP_011304409.1">
    <property type="nucleotide sequence ID" value="NC_007354.1"/>
</dbReference>
<dbReference type="SMR" id="Q3YSH4"/>
<dbReference type="FunCoup" id="Q3YSH4">
    <property type="interactions" value="228"/>
</dbReference>
<dbReference type="STRING" id="269484.Ecaj_0284"/>
<dbReference type="KEGG" id="ecn:Ecaj_0284"/>
<dbReference type="eggNOG" id="COG0284">
    <property type="taxonomic scope" value="Bacteria"/>
</dbReference>
<dbReference type="HOGENOM" id="CLU_067069_1_0_5"/>
<dbReference type="InParanoid" id="Q3YSH4"/>
<dbReference type="UniPathway" id="UPA00070">
    <property type="reaction ID" value="UER00120"/>
</dbReference>
<dbReference type="Proteomes" id="UP000000435">
    <property type="component" value="Chromosome"/>
</dbReference>
<dbReference type="GO" id="GO:0005829">
    <property type="term" value="C:cytosol"/>
    <property type="evidence" value="ECO:0007669"/>
    <property type="project" value="TreeGrafter"/>
</dbReference>
<dbReference type="GO" id="GO:0004590">
    <property type="term" value="F:orotidine-5'-phosphate decarboxylase activity"/>
    <property type="evidence" value="ECO:0007669"/>
    <property type="project" value="UniProtKB-UniRule"/>
</dbReference>
<dbReference type="GO" id="GO:0006207">
    <property type="term" value="P:'de novo' pyrimidine nucleobase biosynthetic process"/>
    <property type="evidence" value="ECO:0007669"/>
    <property type="project" value="InterPro"/>
</dbReference>
<dbReference type="GO" id="GO:0044205">
    <property type="term" value="P:'de novo' UMP biosynthetic process"/>
    <property type="evidence" value="ECO:0007669"/>
    <property type="project" value="UniProtKB-UniRule"/>
</dbReference>
<dbReference type="CDD" id="cd04725">
    <property type="entry name" value="OMP_decarboxylase_like"/>
    <property type="match status" value="1"/>
</dbReference>
<dbReference type="Gene3D" id="3.20.20.70">
    <property type="entry name" value="Aldolase class I"/>
    <property type="match status" value="1"/>
</dbReference>
<dbReference type="HAMAP" id="MF_01200_B">
    <property type="entry name" value="OMPdecase_type1_B"/>
    <property type="match status" value="1"/>
</dbReference>
<dbReference type="InterPro" id="IPR013785">
    <property type="entry name" value="Aldolase_TIM"/>
</dbReference>
<dbReference type="InterPro" id="IPR014732">
    <property type="entry name" value="OMPdecase"/>
</dbReference>
<dbReference type="InterPro" id="IPR018089">
    <property type="entry name" value="OMPdecase_AS"/>
</dbReference>
<dbReference type="InterPro" id="IPR047596">
    <property type="entry name" value="OMPdecase_bac"/>
</dbReference>
<dbReference type="InterPro" id="IPR001754">
    <property type="entry name" value="OMPdeCOase_dom"/>
</dbReference>
<dbReference type="InterPro" id="IPR011060">
    <property type="entry name" value="RibuloseP-bd_barrel"/>
</dbReference>
<dbReference type="NCBIfam" id="NF001273">
    <property type="entry name" value="PRK00230.1"/>
    <property type="match status" value="1"/>
</dbReference>
<dbReference type="NCBIfam" id="TIGR01740">
    <property type="entry name" value="pyrF"/>
    <property type="match status" value="1"/>
</dbReference>
<dbReference type="PANTHER" id="PTHR32119">
    <property type="entry name" value="OROTIDINE 5'-PHOSPHATE DECARBOXYLASE"/>
    <property type="match status" value="1"/>
</dbReference>
<dbReference type="PANTHER" id="PTHR32119:SF2">
    <property type="entry name" value="OROTIDINE 5'-PHOSPHATE DECARBOXYLASE"/>
    <property type="match status" value="1"/>
</dbReference>
<dbReference type="Pfam" id="PF00215">
    <property type="entry name" value="OMPdecase"/>
    <property type="match status" value="1"/>
</dbReference>
<dbReference type="SMART" id="SM00934">
    <property type="entry name" value="OMPdecase"/>
    <property type="match status" value="1"/>
</dbReference>
<dbReference type="SUPFAM" id="SSF51366">
    <property type="entry name" value="Ribulose-phoshate binding barrel"/>
    <property type="match status" value="1"/>
</dbReference>
<dbReference type="PROSITE" id="PS00156">
    <property type="entry name" value="OMPDECASE"/>
    <property type="match status" value="1"/>
</dbReference>
<accession>Q3YSH4</accession>
<comment type="function">
    <text evidence="1">Catalyzes the decarboxylation of orotidine 5'-monophosphate (OMP) to uridine 5'-monophosphate (UMP).</text>
</comment>
<comment type="catalytic activity">
    <reaction evidence="1">
        <text>orotidine 5'-phosphate + H(+) = UMP + CO2</text>
        <dbReference type="Rhea" id="RHEA:11596"/>
        <dbReference type="ChEBI" id="CHEBI:15378"/>
        <dbReference type="ChEBI" id="CHEBI:16526"/>
        <dbReference type="ChEBI" id="CHEBI:57538"/>
        <dbReference type="ChEBI" id="CHEBI:57865"/>
        <dbReference type="EC" id="4.1.1.23"/>
    </reaction>
</comment>
<comment type="pathway">
    <text evidence="1">Pyrimidine metabolism; UMP biosynthesis via de novo pathway; UMP from orotate: step 2/2.</text>
</comment>
<comment type="subunit">
    <text evidence="1">Homodimer.</text>
</comment>
<comment type="similarity">
    <text evidence="1">Belongs to the OMP decarboxylase family. Type 1 subfamily.</text>
</comment>
<organism>
    <name type="scientific">Ehrlichia canis (strain Jake)</name>
    <dbReference type="NCBI Taxonomy" id="269484"/>
    <lineage>
        <taxon>Bacteria</taxon>
        <taxon>Pseudomonadati</taxon>
        <taxon>Pseudomonadota</taxon>
        <taxon>Alphaproteobacteria</taxon>
        <taxon>Rickettsiales</taxon>
        <taxon>Anaplasmataceae</taxon>
        <taxon>Ehrlichia</taxon>
    </lineage>
</organism>
<sequence length="228" mass="24871">MWCNPIICALDTYDINHALRLTKMLYGKISMVKLGLEFFTAHGLSGVQAVSDCGIPIFLDLKLHDIPNTVGKAISVIKSLNIAMLTIHISGGRDMMLSAIDSIFGSMIKLIGVTVLTSIDDSDLKDIGIDRSSIQHVMLLSKVAQEIGLYGIVCSAFEVQEVRNQCGKDFKLVVPGIRFEDDYSDQKRVKNPKDAILAGADYLVIGRPITMSSDPIQTVDAILSSINL</sequence>
<proteinExistence type="inferred from homology"/>
<evidence type="ECO:0000255" key="1">
    <source>
        <dbReference type="HAMAP-Rule" id="MF_01200"/>
    </source>
</evidence>
<gene>
    <name evidence="1" type="primary">pyrF</name>
    <name type="ordered locus">Ecaj_0284</name>
</gene>
<keyword id="KW-0210">Decarboxylase</keyword>
<keyword id="KW-0456">Lyase</keyword>
<keyword id="KW-0665">Pyrimidine biosynthesis</keyword>